<feature type="chain" id="PRO_1000075631" description="Holo-[acyl-carrier-protein] synthase">
    <location>
        <begin position="1"/>
        <end position="134"/>
    </location>
</feature>
<feature type="binding site" evidence="1">
    <location>
        <position position="8"/>
    </location>
    <ligand>
        <name>Mg(2+)</name>
        <dbReference type="ChEBI" id="CHEBI:18420"/>
    </ligand>
</feature>
<feature type="binding site" evidence="1">
    <location>
        <position position="57"/>
    </location>
    <ligand>
        <name>Mg(2+)</name>
        <dbReference type="ChEBI" id="CHEBI:18420"/>
    </ligand>
</feature>
<comment type="function">
    <text evidence="1">Transfers the 4'-phosphopantetheine moiety from coenzyme A to a Ser of acyl-carrier-protein.</text>
</comment>
<comment type="catalytic activity">
    <reaction evidence="1">
        <text>apo-[ACP] + CoA = holo-[ACP] + adenosine 3',5'-bisphosphate + H(+)</text>
        <dbReference type="Rhea" id="RHEA:12068"/>
        <dbReference type="Rhea" id="RHEA-COMP:9685"/>
        <dbReference type="Rhea" id="RHEA-COMP:9690"/>
        <dbReference type="ChEBI" id="CHEBI:15378"/>
        <dbReference type="ChEBI" id="CHEBI:29999"/>
        <dbReference type="ChEBI" id="CHEBI:57287"/>
        <dbReference type="ChEBI" id="CHEBI:58343"/>
        <dbReference type="ChEBI" id="CHEBI:64479"/>
        <dbReference type="EC" id="2.7.8.7"/>
    </reaction>
</comment>
<comment type="cofactor">
    <cofactor evidence="1">
        <name>Mg(2+)</name>
        <dbReference type="ChEBI" id="CHEBI:18420"/>
    </cofactor>
</comment>
<comment type="subcellular location">
    <subcellularLocation>
        <location evidence="1">Cytoplasm</location>
    </subcellularLocation>
</comment>
<comment type="similarity">
    <text evidence="1">Belongs to the P-Pant transferase superfamily. AcpS family.</text>
</comment>
<sequence length="134" mass="14645">MIVGIGSDLIDIRRVEKTLERHGSRFRDRVFTEIEQRKSEGRKQRAASYAKRFAAKEACAKALGTGIAEGVFWRDMGVVNTPSGKPTMHLTGGAAKQLQKLLPAGTNAAIHLTITDDFPLAQAFVIIEALPVLE</sequence>
<dbReference type="EC" id="2.7.8.7" evidence="1"/>
<dbReference type="EMBL" id="CP000872">
    <property type="protein sequence ID" value="ABX61745.1"/>
    <property type="molecule type" value="Genomic_DNA"/>
</dbReference>
<dbReference type="RefSeq" id="WP_002963803.1">
    <property type="nucleotide sequence ID" value="NC_010103.1"/>
</dbReference>
<dbReference type="SMR" id="A9MA33"/>
<dbReference type="GeneID" id="97534013"/>
<dbReference type="KEGG" id="bcs:BCAN_A0672"/>
<dbReference type="HOGENOM" id="CLU_089696_0_2_5"/>
<dbReference type="PhylomeDB" id="A9MA33"/>
<dbReference type="Proteomes" id="UP000001385">
    <property type="component" value="Chromosome I"/>
</dbReference>
<dbReference type="GO" id="GO:0005737">
    <property type="term" value="C:cytoplasm"/>
    <property type="evidence" value="ECO:0007669"/>
    <property type="project" value="UniProtKB-SubCell"/>
</dbReference>
<dbReference type="GO" id="GO:0008897">
    <property type="term" value="F:holo-[acyl-carrier-protein] synthase activity"/>
    <property type="evidence" value="ECO:0007669"/>
    <property type="project" value="UniProtKB-UniRule"/>
</dbReference>
<dbReference type="GO" id="GO:0000287">
    <property type="term" value="F:magnesium ion binding"/>
    <property type="evidence" value="ECO:0007669"/>
    <property type="project" value="UniProtKB-UniRule"/>
</dbReference>
<dbReference type="GO" id="GO:0006633">
    <property type="term" value="P:fatty acid biosynthetic process"/>
    <property type="evidence" value="ECO:0007669"/>
    <property type="project" value="UniProtKB-UniRule"/>
</dbReference>
<dbReference type="Gene3D" id="3.90.470.20">
    <property type="entry name" value="4'-phosphopantetheinyl transferase domain"/>
    <property type="match status" value="1"/>
</dbReference>
<dbReference type="HAMAP" id="MF_00101">
    <property type="entry name" value="AcpS"/>
    <property type="match status" value="1"/>
</dbReference>
<dbReference type="InterPro" id="IPR008278">
    <property type="entry name" value="4-PPantetheinyl_Trfase_dom"/>
</dbReference>
<dbReference type="InterPro" id="IPR037143">
    <property type="entry name" value="4-PPantetheinyl_Trfase_dom_sf"/>
</dbReference>
<dbReference type="InterPro" id="IPR002582">
    <property type="entry name" value="ACPS"/>
</dbReference>
<dbReference type="InterPro" id="IPR004568">
    <property type="entry name" value="Ppantetheine-prot_Trfase_dom"/>
</dbReference>
<dbReference type="NCBIfam" id="TIGR00516">
    <property type="entry name" value="acpS"/>
    <property type="match status" value="1"/>
</dbReference>
<dbReference type="NCBIfam" id="TIGR00556">
    <property type="entry name" value="pantethn_trn"/>
    <property type="match status" value="1"/>
</dbReference>
<dbReference type="Pfam" id="PF01648">
    <property type="entry name" value="ACPS"/>
    <property type="match status" value="1"/>
</dbReference>
<dbReference type="SUPFAM" id="SSF56214">
    <property type="entry name" value="4'-phosphopantetheinyl transferase"/>
    <property type="match status" value="1"/>
</dbReference>
<evidence type="ECO:0000255" key="1">
    <source>
        <dbReference type="HAMAP-Rule" id="MF_00101"/>
    </source>
</evidence>
<reference key="1">
    <citation type="submission" date="2007-10" db="EMBL/GenBank/DDBJ databases">
        <title>Brucella canis ATCC 23365 whole genome shotgun sequencing project.</title>
        <authorList>
            <person name="Setubal J.C."/>
            <person name="Bowns C."/>
            <person name="Boyle S."/>
            <person name="Crasta O.R."/>
            <person name="Czar M.J."/>
            <person name="Dharmanolla C."/>
            <person name="Gillespie J.J."/>
            <person name="Kenyon R.W."/>
            <person name="Lu J."/>
            <person name="Mane S."/>
            <person name="Mohapatra S."/>
            <person name="Nagrani S."/>
            <person name="Purkayastha A."/>
            <person name="Rajasimha H.K."/>
            <person name="Shallom J.M."/>
            <person name="Shallom S."/>
            <person name="Shukla M."/>
            <person name="Snyder E.E."/>
            <person name="Sobral B.W."/>
            <person name="Wattam A.R."/>
            <person name="Will R."/>
            <person name="Williams K."/>
            <person name="Yoo H."/>
            <person name="Bruce D."/>
            <person name="Detter C."/>
            <person name="Munk C."/>
            <person name="Brettin T.S."/>
        </authorList>
    </citation>
    <scope>NUCLEOTIDE SEQUENCE [LARGE SCALE GENOMIC DNA]</scope>
    <source>
        <strain>ATCC 23365 / NCTC 10854 / RM-666</strain>
    </source>
</reference>
<organism>
    <name type="scientific">Brucella canis (strain ATCC 23365 / NCTC 10854 / RM-666)</name>
    <dbReference type="NCBI Taxonomy" id="483179"/>
    <lineage>
        <taxon>Bacteria</taxon>
        <taxon>Pseudomonadati</taxon>
        <taxon>Pseudomonadota</taxon>
        <taxon>Alphaproteobacteria</taxon>
        <taxon>Hyphomicrobiales</taxon>
        <taxon>Brucellaceae</taxon>
        <taxon>Brucella/Ochrobactrum group</taxon>
        <taxon>Brucella</taxon>
    </lineage>
</organism>
<protein>
    <recommendedName>
        <fullName evidence="1">Holo-[acyl-carrier-protein] synthase</fullName>
        <shortName evidence="1">Holo-ACP synthase</shortName>
        <ecNumber evidence="1">2.7.8.7</ecNumber>
    </recommendedName>
    <alternativeName>
        <fullName evidence="1">4'-phosphopantetheinyl transferase AcpS</fullName>
    </alternativeName>
</protein>
<name>ACPS_BRUC2</name>
<accession>A9MA33</accession>
<keyword id="KW-0963">Cytoplasm</keyword>
<keyword id="KW-0275">Fatty acid biosynthesis</keyword>
<keyword id="KW-0276">Fatty acid metabolism</keyword>
<keyword id="KW-0444">Lipid biosynthesis</keyword>
<keyword id="KW-0443">Lipid metabolism</keyword>
<keyword id="KW-0460">Magnesium</keyword>
<keyword id="KW-0479">Metal-binding</keyword>
<keyword id="KW-1185">Reference proteome</keyword>
<keyword id="KW-0808">Transferase</keyword>
<gene>
    <name evidence="1" type="primary">acpS</name>
    <name type="ordered locus">BCAN_A0672</name>
</gene>
<proteinExistence type="inferred from homology"/>